<reference key="1">
    <citation type="journal article" date="2001" name="Lancet">
        <title>Whole genome sequencing of meticillin-resistant Staphylococcus aureus.</title>
        <authorList>
            <person name="Kuroda M."/>
            <person name="Ohta T."/>
            <person name="Uchiyama I."/>
            <person name="Baba T."/>
            <person name="Yuzawa H."/>
            <person name="Kobayashi I."/>
            <person name="Cui L."/>
            <person name="Oguchi A."/>
            <person name="Aoki K."/>
            <person name="Nagai Y."/>
            <person name="Lian J.-Q."/>
            <person name="Ito T."/>
            <person name="Kanamori M."/>
            <person name="Matsumaru H."/>
            <person name="Maruyama A."/>
            <person name="Murakami H."/>
            <person name="Hosoyama A."/>
            <person name="Mizutani-Ui Y."/>
            <person name="Takahashi N.K."/>
            <person name="Sawano T."/>
            <person name="Inoue R."/>
            <person name="Kaito C."/>
            <person name="Sekimizu K."/>
            <person name="Hirakawa H."/>
            <person name="Kuhara S."/>
            <person name="Goto S."/>
            <person name="Yabuzaki J."/>
            <person name="Kanehisa M."/>
            <person name="Yamashita A."/>
            <person name="Oshima K."/>
            <person name="Furuya K."/>
            <person name="Yoshino C."/>
            <person name="Shiba T."/>
            <person name="Hattori M."/>
            <person name="Ogasawara N."/>
            <person name="Hayashi H."/>
            <person name="Hiramatsu K."/>
        </authorList>
    </citation>
    <scope>NUCLEOTIDE SEQUENCE [LARGE SCALE GENOMIC DNA]</scope>
    <source>
        <strain>N315</strain>
    </source>
</reference>
<comment type="function">
    <text evidence="1">Transfers the 4'-phosphopantetheine moiety from coenzyme A to a Ser of acyl-carrier-protein.</text>
</comment>
<comment type="catalytic activity">
    <reaction evidence="1">
        <text>apo-[ACP] + CoA = holo-[ACP] + adenosine 3',5'-bisphosphate + H(+)</text>
        <dbReference type="Rhea" id="RHEA:12068"/>
        <dbReference type="Rhea" id="RHEA-COMP:9685"/>
        <dbReference type="Rhea" id="RHEA-COMP:9690"/>
        <dbReference type="ChEBI" id="CHEBI:15378"/>
        <dbReference type="ChEBI" id="CHEBI:29999"/>
        <dbReference type="ChEBI" id="CHEBI:57287"/>
        <dbReference type="ChEBI" id="CHEBI:58343"/>
        <dbReference type="ChEBI" id="CHEBI:64479"/>
        <dbReference type="EC" id="2.7.8.7"/>
    </reaction>
</comment>
<comment type="cofactor">
    <cofactor evidence="1">
        <name>Mg(2+)</name>
        <dbReference type="ChEBI" id="CHEBI:18420"/>
    </cofactor>
</comment>
<comment type="subcellular location">
    <subcellularLocation>
        <location evidence="1">Cytoplasm</location>
    </subcellularLocation>
</comment>
<comment type="similarity">
    <text evidence="1">Belongs to the P-Pant transferase superfamily. AcpS family.</text>
</comment>
<name>ACPS_STAAN</name>
<accession>P63469</accession>
<accession>Q99SI4</accession>
<keyword id="KW-0963">Cytoplasm</keyword>
<keyword id="KW-0275">Fatty acid biosynthesis</keyword>
<keyword id="KW-0276">Fatty acid metabolism</keyword>
<keyword id="KW-0444">Lipid biosynthesis</keyword>
<keyword id="KW-0443">Lipid metabolism</keyword>
<keyword id="KW-0460">Magnesium</keyword>
<keyword id="KW-0479">Metal-binding</keyword>
<keyword id="KW-0808">Transferase</keyword>
<gene>
    <name evidence="1" type="primary">acpS</name>
    <name type="synonym">dpj</name>
    <name type="ordered locus">SA1875</name>
</gene>
<protein>
    <recommendedName>
        <fullName evidence="1">Holo-[acyl-carrier-protein] synthase</fullName>
        <shortName evidence="1">Holo-ACP synthase</shortName>
        <ecNumber evidence="1">2.7.8.7</ecNumber>
    </recommendedName>
    <alternativeName>
        <fullName evidence="1">4'-phosphopantetheinyl transferase AcpS</fullName>
    </alternativeName>
</protein>
<sequence length="119" mass="13634">MIHGIGVDLIEIDRIKVLYSKQPKLVERILTKNEQHKFNNFTHEQRKIEFLAGRFATKEAFSKALGTGLGKHVAFNDIDCYNDELGKPKIDYEGFIVHVSISHTEHYAMSQVVLEKSAF</sequence>
<proteinExistence type="inferred from homology"/>
<evidence type="ECO:0000255" key="1">
    <source>
        <dbReference type="HAMAP-Rule" id="MF_00101"/>
    </source>
</evidence>
<organism>
    <name type="scientific">Staphylococcus aureus (strain N315)</name>
    <dbReference type="NCBI Taxonomy" id="158879"/>
    <lineage>
        <taxon>Bacteria</taxon>
        <taxon>Bacillati</taxon>
        <taxon>Bacillota</taxon>
        <taxon>Bacilli</taxon>
        <taxon>Bacillales</taxon>
        <taxon>Staphylococcaceae</taxon>
        <taxon>Staphylococcus</taxon>
    </lineage>
</organism>
<dbReference type="EC" id="2.7.8.7" evidence="1"/>
<dbReference type="EMBL" id="BA000018">
    <property type="protein sequence ID" value="BAB43158.1"/>
    <property type="molecule type" value="Genomic_DNA"/>
</dbReference>
<dbReference type="PIR" id="E89999">
    <property type="entry name" value="E89999"/>
</dbReference>
<dbReference type="RefSeq" id="WP_000581197.1">
    <property type="nucleotide sequence ID" value="NC_002745.2"/>
</dbReference>
<dbReference type="SMR" id="P63469"/>
<dbReference type="EnsemblBacteria" id="BAB43158">
    <property type="protein sequence ID" value="BAB43158"/>
    <property type="gene ID" value="BAB43158"/>
</dbReference>
<dbReference type="KEGG" id="sau:SA1875"/>
<dbReference type="HOGENOM" id="CLU_089696_1_2_9"/>
<dbReference type="GO" id="GO:0005737">
    <property type="term" value="C:cytoplasm"/>
    <property type="evidence" value="ECO:0007669"/>
    <property type="project" value="UniProtKB-SubCell"/>
</dbReference>
<dbReference type="GO" id="GO:0008897">
    <property type="term" value="F:holo-[acyl-carrier-protein] synthase activity"/>
    <property type="evidence" value="ECO:0007669"/>
    <property type="project" value="UniProtKB-UniRule"/>
</dbReference>
<dbReference type="GO" id="GO:0000287">
    <property type="term" value="F:magnesium ion binding"/>
    <property type="evidence" value="ECO:0007669"/>
    <property type="project" value="UniProtKB-UniRule"/>
</dbReference>
<dbReference type="GO" id="GO:0006633">
    <property type="term" value="P:fatty acid biosynthetic process"/>
    <property type="evidence" value="ECO:0007669"/>
    <property type="project" value="UniProtKB-UniRule"/>
</dbReference>
<dbReference type="Gene3D" id="3.90.470.20">
    <property type="entry name" value="4'-phosphopantetheinyl transferase domain"/>
    <property type="match status" value="1"/>
</dbReference>
<dbReference type="HAMAP" id="MF_00101">
    <property type="entry name" value="AcpS"/>
    <property type="match status" value="1"/>
</dbReference>
<dbReference type="InterPro" id="IPR008278">
    <property type="entry name" value="4-PPantetheinyl_Trfase_dom"/>
</dbReference>
<dbReference type="InterPro" id="IPR037143">
    <property type="entry name" value="4-PPantetheinyl_Trfase_dom_sf"/>
</dbReference>
<dbReference type="InterPro" id="IPR002582">
    <property type="entry name" value="ACPS"/>
</dbReference>
<dbReference type="InterPro" id="IPR004568">
    <property type="entry name" value="Ppantetheine-prot_Trfase_dom"/>
</dbReference>
<dbReference type="NCBIfam" id="TIGR00516">
    <property type="entry name" value="acpS"/>
    <property type="match status" value="1"/>
</dbReference>
<dbReference type="NCBIfam" id="TIGR00556">
    <property type="entry name" value="pantethn_trn"/>
    <property type="match status" value="1"/>
</dbReference>
<dbReference type="Pfam" id="PF01648">
    <property type="entry name" value="ACPS"/>
    <property type="match status" value="1"/>
</dbReference>
<dbReference type="SUPFAM" id="SSF56214">
    <property type="entry name" value="4'-phosphopantetheinyl transferase"/>
    <property type="match status" value="1"/>
</dbReference>
<feature type="chain" id="PRO_0000175702" description="Holo-[acyl-carrier-protein] synthase">
    <location>
        <begin position="1"/>
        <end position="119"/>
    </location>
</feature>
<feature type="binding site" evidence="1">
    <location>
        <position position="8"/>
    </location>
    <ligand>
        <name>Mg(2+)</name>
        <dbReference type="ChEBI" id="CHEBI:18420"/>
    </ligand>
</feature>
<feature type="binding site" evidence="1">
    <location>
        <position position="59"/>
    </location>
    <ligand>
        <name>Mg(2+)</name>
        <dbReference type="ChEBI" id="CHEBI:18420"/>
    </ligand>
</feature>